<protein>
    <recommendedName>
        <fullName>Putative BTB/POZ domain-containing protein R842</fullName>
    </recommendedName>
</protein>
<name>YR842_MIMIV</name>
<sequence length="504" mass="59320">MNSQNYSINNFKQIFDNDILSDVKLILKDNNKELSLNLHKIVLFTHCKFFQAMFVGFEESTKKEVVLNVQNVDICRDIIKEFYGFKSPSVTRYQNWKCRLEYHICCNYFLIDNKFPDIVNINKSCFDDLLNLIDKINYNDVTIRLLAKNLPSNYDLSKLPLELVKKMRNKSCYSGFVFFGNEKHLCIADENFDNIRKFQYGIDLGNDYCYMPNSNKIVRVVSNYVANFSLQSESFECYKIRTKKFNKKFDKKYKIKSSDSFEKPIYNSLRNEIIIIHRKKKYSIICVLDAKKFDLVRTICKFKKSKEKLCHMALSYDCNKLVFVLTIINEVNNKNTEIYVKYLDTGVQERIYKTNRIVNDLKFLNNDIIVFYNNKNNSGHLKTYDISKHKKLPGLTTFPITHISICQEKYVIIVTNMYTHIMVSKKFSGIKYFENCKVVCSPSGKIVSYGNSKNFLTSIDDYENYKTLDSLEINSILPVNVKYDIHDKLNDYIDSLKKIEEENI</sequence>
<accession>Q5URB7</accession>
<organismHost>
    <name type="scientific">Acanthamoeba polyphaga</name>
    <name type="common">Amoeba</name>
    <dbReference type="NCBI Taxonomy" id="5757"/>
</organismHost>
<proteinExistence type="inferred from homology"/>
<organism>
    <name type="scientific">Acanthamoeba polyphaga mimivirus</name>
    <name type="common">APMV</name>
    <dbReference type="NCBI Taxonomy" id="212035"/>
    <lineage>
        <taxon>Viruses</taxon>
        <taxon>Varidnaviria</taxon>
        <taxon>Bamfordvirae</taxon>
        <taxon>Nucleocytoviricota</taxon>
        <taxon>Megaviricetes</taxon>
        <taxon>Imitervirales</taxon>
        <taxon>Mimiviridae</taxon>
        <taxon>Megamimivirinae</taxon>
        <taxon>Mimivirus</taxon>
        <taxon>Mimivirus bradfordmassiliense</taxon>
    </lineage>
</organism>
<keyword id="KW-1185">Reference proteome</keyword>
<evidence type="ECO:0000255" key="1">
    <source>
        <dbReference type="PROSITE-ProRule" id="PRU00037"/>
    </source>
</evidence>
<evidence type="ECO:0000305" key="2"/>
<feature type="chain" id="PRO_0000186239" description="Putative BTB/POZ domain-containing protein R842">
    <location>
        <begin position="1"/>
        <end position="504"/>
    </location>
</feature>
<feature type="domain" description="BTB" evidence="1">
    <location>
        <begin position="21"/>
        <end position="91"/>
    </location>
</feature>
<gene>
    <name type="ordered locus">MIMI_R842</name>
</gene>
<dbReference type="EMBL" id="AY653733">
    <property type="protein sequence ID" value="AAV51100.1"/>
    <property type="molecule type" value="Genomic_DNA"/>
</dbReference>
<dbReference type="SMR" id="Q5URB7"/>
<dbReference type="KEGG" id="vg:9925505"/>
<dbReference type="OrthoDB" id="31033at10239"/>
<dbReference type="Proteomes" id="UP000001134">
    <property type="component" value="Genome"/>
</dbReference>
<dbReference type="Gene3D" id="3.30.710.10">
    <property type="entry name" value="Potassium Channel Kv1.1, Chain A"/>
    <property type="match status" value="1"/>
</dbReference>
<dbReference type="InterPro" id="IPR000210">
    <property type="entry name" value="BTB/POZ_dom"/>
</dbReference>
<dbReference type="InterPro" id="IPR011333">
    <property type="entry name" value="SKP1/BTB/POZ_sf"/>
</dbReference>
<dbReference type="Pfam" id="PF00651">
    <property type="entry name" value="BTB"/>
    <property type="match status" value="1"/>
</dbReference>
<dbReference type="SUPFAM" id="SSF82171">
    <property type="entry name" value="DPP6 N-terminal domain-like"/>
    <property type="match status" value="1"/>
</dbReference>
<dbReference type="SUPFAM" id="SSF54695">
    <property type="entry name" value="POZ domain"/>
    <property type="match status" value="1"/>
</dbReference>
<dbReference type="PROSITE" id="PS50097">
    <property type="entry name" value="BTB"/>
    <property type="match status" value="1"/>
</dbReference>
<comment type="similarity">
    <text evidence="2">Belongs to the mimivirus BTB/WD family.</text>
</comment>
<reference key="1">
    <citation type="journal article" date="2004" name="Science">
        <title>The 1.2-megabase genome sequence of Mimivirus.</title>
        <authorList>
            <person name="Raoult D."/>
            <person name="Audic S."/>
            <person name="Robert C."/>
            <person name="Abergel C."/>
            <person name="Renesto P."/>
            <person name="Ogata H."/>
            <person name="La Scola B."/>
            <person name="Susan M."/>
            <person name="Claverie J.-M."/>
        </authorList>
    </citation>
    <scope>NUCLEOTIDE SEQUENCE [LARGE SCALE GENOMIC DNA]</scope>
    <source>
        <strain>Rowbotham-Bradford</strain>
    </source>
</reference>